<organism>
    <name type="scientific">Cereibacter sphaeroides (strain ATCC 17029 / ATH 2.4.9)</name>
    <name type="common">Rhodobacter sphaeroides</name>
    <dbReference type="NCBI Taxonomy" id="349101"/>
    <lineage>
        <taxon>Bacteria</taxon>
        <taxon>Pseudomonadati</taxon>
        <taxon>Pseudomonadota</taxon>
        <taxon>Alphaproteobacteria</taxon>
        <taxon>Rhodobacterales</taxon>
        <taxon>Paracoccaceae</taxon>
        <taxon>Cereibacter</taxon>
    </lineage>
</organism>
<protein>
    <recommendedName>
        <fullName evidence="1">UPF0102 protein Rsph17029_0461</fullName>
    </recommendedName>
</protein>
<reference key="1">
    <citation type="submission" date="2007-02" db="EMBL/GenBank/DDBJ databases">
        <title>Complete sequence of chromosome 1 of Rhodobacter sphaeroides ATCC 17029.</title>
        <authorList>
            <person name="Copeland A."/>
            <person name="Lucas S."/>
            <person name="Lapidus A."/>
            <person name="Barry K."/>
            <person name="Detter J.C."/>
            <person name="Glavina del Rio T."/>
            <person name="Hammon N."/>
            <person name="Israni S."/>
            <person name="Dalin E."/>
            <person name="Tice H."/>
            <person name="Pitluck S."/>
            <person name="Kiss H."/>
            <person name="Brettin T."/>
            <person name="Bruce D."/>
            <person name="Han C."/>
            <person name="Tapia R."/>
            <person name="Gilna P."/>
            <person name="Schmutz J."/>
            <person name="Larimer F."/>
            <person name="Land M."/>
            <person name="Hauser L."/>
            <person name="Kyrpides N."/>
            <person name="Mikhailova N."/>
            <person name="Richardson P."/>
            <person name="Mackenzie C."/>
            <person name="Choudhary M."/>
            <person name="Donohue T.J."/>
            <person name="Kaplan S."/>
        </authorList>
    </citation>
    <scope>NUCLEOTIDE SEQUENCE [LARGE SCALE GENOMIC DNA]</scope>
    <source>
        <strain>ATCC 17029 / ATH 2.4.9</strain>
    </source>
</reference>
<evidence type="ECO:0000255" key="1">
    <source>
        <dbReference type="HAMAP-Rule" id="MF_00048"/>
    </source>
</evidence>
<dbReference type="EMBL" id="CP000577">
    <property type="protein sequence ID" value="ABN75577.1"/>
    <property type="molecule type" value="Genomic_DNA"/>
</dbReference>
<dbReference type="RefSeq" id="WP_011840372.1">
    <property type="nucleotide sequence ID" value="NC_009049.1"/>
</dbReference>
<dbReference type="SMR" id="A3PGW1"/>
<dbReference type="KEGG" id="rsh:Rsph17029_0461"/>
<dbReference type="HOGENOM" id="CLU_115353_0_1_5"/>
<dbReference type="GO" id="GO:0003676">
    <property type="term" value="F:nucleic acid binding"/>
    <property type="evidence" value="ECO:0007669"/>
    <property type="project" value="InterPro"/>
</dbReference>
<dbReference type="Gene3D" id="3.40.1350.10">
    <property type="match status" value="1"/>
</dbReference>
<dbReference type="HAMAP" id="MF_00048">
    <property type="entry name" value="UPF0102"/>
    <property type="match status" value="1"/>
</dbReference>
<dbReference type="InterPro" id="IPR011335">
    <property type="entry name" value="Restrct_endonuc-II-like"/>
</dbReference>
<dbReference type="InterPro" id="IPR011856">
    <property type="entry name" value="tRNA_endonuc-like_dom_sf"/>
</dbReference>
<dbReference type="InterPro" id="IPR003509">
    <property type="entry name" value="UPF0102_YraN-like"/>
</dbReference>
<dbReference type="NCBIfam" id="NF011269">
    <property type="entry name" value="PRK14676.1"/>
    <property type="match status" value="1"/>
</dbReference>
<dbReference type="PANTHER" id="PTHR34039">
    <property type="entry name" value="UPF0102 PROTEIN YRAN"/>
    <property type="match status" value="1"/>
</dbReference>
<dbReference type="PANTHER" id="PTHR34039:SF1">
    <property type="entry name" value="UPF0102 PROTEIN YRAN"/>
    <property type="match status" value="1"/>
</dbReference>
<dbReference type="Pfam" id="PF02021">
    <property type="entry name" value="UPF0102"/>
    <property type="match status" value="1"/>
</dbReference>
<dbReference type="SUPFAM" id="SSF52980">
    <property type="entry name" value="Restriction endonuclease-like"/>
    <property type="match status" value="1"/>
</dbReference>
<sequence length="117" mass="12701">MSGEVSYYAGQTAEEAVARIYDRSGRPVAARRWRGVSGEIDLIAREGAEVIFIEVKKSKSHAAAAARLSRRQMDRIYGAASEFLAGEPRGQLTASRFDVALVDALGRVEIIENAFAA</sequence>
<feature type="chain" id="PRO_0000336247" description="UPF0102 protein Rsph17029_0461">
    <location>
        <begin position="1"/>
        <end position="117"/>
    </location>
</feature>
<gene>
    <name type="ordered locus">Rsph17029_0461</name>
</gene>
<name>Y461_CERS1</name>
<proteinExistence type="inferred from homology"/>
<comment type="similarity">
    <text evidence="1">Belongs to the UPF0102 family.</text>
</comment>
<accession>A3PGW1</accession>